<reference key="1">
    <citation type="journal article" date="2005" name="Nat. Genet.">
        <title>The complete genome sequence of Francisella tularensis, the causative agent of tularemia.</title>
        <authorList>
            <person name="Larsson P."/>
            <person name="Oyston P.C.F."/>
            <person name="Chain P."/>
            <person name="Chu M.C."/>
            <person name="Duffield M."/>
            <person name="Fuxelius H.-H."/>
            <person name="Garcia E."/>
            <person name="Haelltorp G."/>
            <person name="Johansson D."/>
            <person name="Isherwood K.E."/>
            <person name="Karp P.D."/>
            <person name="Larsson E."/>
            <person name="Liu Y."/>
            <person name="Michell S."/>
            <person name="Prior J."/>
            <person name="Prior R."/>
            <person name="Malfatti S."/>
            <person name="Sjoestedt A."/>
            <person name="Svensson K."/>
            <person name="Thompson N."/>
            <person name="Vergez L."/>
            <person name="Wagg J.K."/>
            <person name="Wren B.W."/>
            <person name="Lindler L.E."/>
            <person name="Andersson S.G.E."/>
            <person name="Forsman M."/>
            <person name="Titball R.W."/>
        </authorList>
    </citation>
    <scope>NUCLEOTIDE SEQUENCE [LARGE SCALE GENOMIC DNA]</scope>
    <source>
        <strain>SCHU S4 / Schu 4</strain>
    </source>
</reference>
<accession>Q5NGW7</accession>
<evidence type="ECO:0000255" key="1">
    <source>
        <dbReference type="HAMAP-Rule" id="MF_00599"/>
    </source>
</evidence>
<dbReference type="EMBL" id="AJ749949">
    <property type="protein sequence ID" value="CAG45343.1"/>
    <property type="molecule type" value="Genomic_DNA"/>
</dbReference>
<dbReference type="RefSeq" id="WP_003020516.1">
    <property type="nucleotide sequence ID" value="NZ_CP010290.1"/>
</dbReference>
<dbReference type="RefSeq" id="YP_169725.1">
    <property type="nucleotide sequence ID" value="NC_006570.2"/>
</dbReference>
<dbReference type="SMR" id="Q5NGW7"/>
<dbReference type="STRING" id="177416.FTT_0710"/>
<dbReference type="DNASU" id="3191079"/>
<dbReference type="EnsemblBacteria" id="CAG45343">
    <property type="protein sequence ID" value="CAG45343"/>
    <property type="gene ID" value="FTT_0710"/>
</dbReference>
<dbReference type="KEGG" id="ftu:FTT_0710"/>
<dbReference type="eggNOG" id="COG2919">
    <property type="taxonomic scope" value="Bacteria"/>
</dbReference>
<dbReference type="OrthoDB" id="7061211at2"/>
<dbReference type="Proteomes" id="UP000001174">
    <property type="component" value="Chromosome"/>
</dbReference>
<dbReference type="GO" id="GO:0032153">
    <property type="term" value="C:cell division site"/>
    <property type="evidence" value="ECO:0007669"/>
    <property type="project" value="UniProtKB-UniRule"/>
</dbReference>
<dbReference type="GO" id="GO:0030428">
    <property type="term" value="C:cell septum"/>
    <property type="evidence" value="ECO:0007669"/>
    <property type="project" value="TreeGrafter"/>
</dbReference>
<dbReference type="GO" id="GO:0005886">
    <property type="term" value="C:plasma membrane"/>
    <property type="evidence" value="ECO:0007669"/>
    <property type="project" value="UniProtKB-SubCell"/>
</dbReference>
<dbReference type="GO" id="GO:0043093">
    <property type="term" value="P:FtsZ-dependent cytokinesis"/>
    <property type="evidence" value="ECO:0007669"/>
    <property type="project" value="UniProtKB-UniRule"/>
</dbReference>
<dbReference type="HAMAP" id="MF_00599">
    <property type="entry name" value="FtsB"/>
    <property type="match status" value="1"/>
</dbReference>
<dbReference type="InterPro" id="IPR023081">
    <property type="entry name" value="Cell_div_FtsB"/>
</dbReference>
<dbReference type="InterPro" id="IPR007060">
    <property type="entry name" value="FtsL/DivIC"/>
</dbReference>
<dbReference type="PANTHER" id="PTHR37485">
    <property type="entry name" value="CELL DIVISION PROTEIN FTSB"/>
    <property type="match status" value="1"/>
</dbReference>
<dbReference type="PANTHER" id="PTHR37485:SF1">
    <property type="entry name" value="CELL DIVISION PROTEIN FTSB"/>
    <property type="match status" value="1"/>
</dbReference>
<dbReference type="Pfam" id="PF04977">
    <property type="entry name" value="DivIC"/>
    <property type="match status" value="1"/>
</dbReference>
<proteinExistence type="inferred from homology"/>
<comment type="function">
    <text evidence="1">Essential cell division protein. May link together the upstream cell division proteins, which are predominantly cytoplasmic, with the downstream cell division proteins, which are predominantly periplasmic.</text>
</comment>
<comment type="subunit">
    <text evidence="1">Part of a complex composed of FtsB, FtsL and FtsQ.</text>
</comment>
<comment type="subcellular location">
    <subcellularLocation>
        <location evidence="1">Cell inner membrane</location>
        <topology evidence="1">Single-pass type II membrane protein</topology>
    </subcellularLocation>
    <text evidence="1">Localizes to the division septum.</text>
</comment>
<comment type="similarity">
    <text evidence="1">Belongs to the FtsB family.</text>
</comment>
<name>FTSB_FRATT</name>
<gene>
    <name evidence="1" type="primary">ftsB</name>
    <name type="ordered locus">FTT_0710</name>
</gene>
<feature type="chain" id="PRO_0000414370" description="Cell division protein FtsB">
    <location>
        <begin position="1"/>
        <end position="96"/>
    </location>
</feature>
<feature type="topological domain" description="Cytoplasmic" evidence="1">
    <location>
        <begin position="1"/>
        <end position="11"/>
    </location>
</feature>
<feature type="transmembrane region" description="Helical" evidence="1">
    <location>
        <begin position="12"/>
        <end position="29"/>
    </location>
</feature>
<feature type="topological domain" description="Periplasmic" evidence="1">
    <location>
        <begin position="30"/>
        <end position="96"/>
    </location>
</feature>
<sequence length="96" mass="11142">MDIKSNSFFYIFISVVLLLIAILQYDLWFSNTGFIKYQALKKSVISQQKEVKHKSQTNVQLYSEVVSLRQNSEVLESLARENMGLIKQGEVFYSVK</sequence>
<organism>
    <name type="scientific">Francisella tularensis subsp. tularensis (strain SCHU S4 / Schu 4)</name>
    <dbReference type="NCBI Taxonomy" id="177416"/>
    <lineage>
        <taxon>Bacteria</taxon>
        <taxon>Pseudomonadati</taxon>
        <taxon>Pseudomonadota</taxon>
        <taxon>Gammaproteobacteria</taxon>
        <taxon>Thiotrichales</taxon>
        <taxon>Francisellaceae</taxon>
        <taxon>Francisella</taxon>
    </lineage>
</organism>
<protein>
    <recommendedName>
        <fullName evidence="1">Cell division protein FtsB</fullName>
    </recommendedName>
</protein>
<keyword id="KW-0131">Cell cycle</keyword>
<keyword id="KW-0132">Cell division</keyword>
<keyword id="KW-0997">Cell inner membrane</keyword>
<keyword id="KW-1003">Cell membrane</keyword>
<keyword id="KW-0472">Membrane</keyword>
<keyword id="KW-1185">Reference proteome</keyword>
<keyword id="KW-0812">Transmembrane</keyword>
<keyword id="KW-1133">Transmembrane helix</keyword>